<sequence>MAKTSAVEKNKRREKLVKRHADKRARLKAIVMDQGLPLEERFRATIRLAELPRNSSKVRIRNRCEVSGRPRGYYRKLKMSRIALRQLGSLGQIPGIVKSSW</sequence>
<feature type="chain" id="PRO_1000128472" description="Small ribosomal subunit protein uS14">
    <location>
        <begin position="1"/>
        <end position="101"/>
    </location>
</feature>
<comment type="function">
    <text evidence="1">Binds 16S rRNA, required for the assembly of 30S particles and may also be responsible for determining the conformation of the 16S rRNA at the A site.</text>
</comment>
<comment type="subunit">
    <text evidence="1">Part of the 30S ribosomal subunit. Contacts proteins S3 and S10.</text>
</comment>
<comment type="similarity">
    <text evidence="1">Belongs to the universal ribosomal protein uS14 family.</text>
</comment>
<name>RS14_BRUA4</name>
<dbReference type="EMBL" id="CP000758">
    <property type="protein sequence ID" value="ABS14685.1"/>
    <property type="molecule type" value="Genomic_DNA"/>
</dbReference>
<dbReference type="RefSeq" id="WP_010659922.1">
    <property type="nucleotide sequence ID" value="NC_009667.1"/>
</dbReference>
<dbReference type="SMR" id="A6X0D1"/>
<dbReference type="STRING" id="439375.Oant_1969"/>
<dbReference type="GeneID" id="61317573"/>
<dbReference type="KEGG" id="oan:Oant_1969"/>
<dbReference type="eggNOG" id="COG0199">
    <property type="taxonomic scope" value="Bacteria"/>
</dbReference>
<dbReference type="HOGENOM" id="CLU_139869_0_1_5"/>
<dbReference type="Proteomes" id="UP000002301">
    <property type="component" value="Chromosome 1"/>
</dbReference>
<dbReference type="GO" id="GO:0005737">
    <property type="term" value="C:cytoplasm"/>
    <property type="evidence" value="ECO:0007669"/>
    <property type="project" value="UniProtKB-ARBA"/>
</dbReference>
<dbReference type="GO" id="GO:0015935">
    <property type="term" value="C:small ribosomal subunit"/>
    <property type="evidence" value="ECO:0007669"/>
    <property type="project" value="TreeGrafter"/>
</dbReference>
<dbReference type="GO" id="GO:0019843">
    <property type="term" value="F:rRNA binding"/>
    <property type="evidence" value="ECO:0007669"/>
    <property type="project" value="UniProtKB-UniRule"/>
</dbReference>
<dbReference type="GO" id="GO:0003735">
    <property type="term" value="F:structural constituent of ribosome"/>
    <property type="evidence" value="ECO:0007669"/>
    <property type="project" value="InterPro"/>
</dbReference>
<dbReference type="GO" id="GO:0006412">
    <property type="term" value="P:translation"/>
    <property type="evidence" value="ECO:0007669"/>
    <property type="project" value="UniProtKB-UniRule"/>
</dbReference>
<dbReference type="FunFam" id="1.10.287.1480:FF:000001">
    <property type="entry name" value="30S ribosomal protein S14"/>
    <property type="match status" value="1"/>
</dbReference>
<dbReference type="Gene3D" id="1.10.287.1480">
    <property type="match status" value="1"/>
</dbReference>
<dbReference type="HAMAP" id="MF_00537">
    <property type="entry name" value="Ribosomal_uS14_1"/>
    <property type="match status" value="1"/>
</dbReference>
<dbReference type="InterPro" id="IPR001209">
    <property type="entry name" value="Ribosomal_uS14"/>
</dbReference>
<dbReference type="InterPro" id="IPR023036">
    <property type="entry name" value="Ribosomal_uS14_bac/plastid"/>
</dbReference>
<dbReference type="InterPro" id="IPR018271">
    <property type="entry name" value="Ribosomal_uS14_CS"/>
</dbReference>
<dbReference type="NCBIfam" id="NF006477">
    <property type="entry name" value="PRK08881.1"/>
    <property type="match status" value="1"/>
</dbReference>
<dbReference type="PANTHER" id="PTHR19836">
    <property type="entry name" value="30S RIBOSOMAL PROTEIN S14"/>
    <property type="match status" value="1"/>
</dbReference>
<dbReference type="PANTHER" id="PTHR19836:SF19">
    <property type="entry name" value="SMALL RIBOSOMAL SUBUNIT PROTEIN US14M"/>
    <property type="match status" value="1"/>
</dbReference>
<dbReference type="Pfam" id="PF00253">
    <property type="entry name" value="Ribosomal_S14"/>
    <property type="match status" value="1"/>
</dbReference>
<dbReference type="SUPFAM" id="SSF57716">
    <property type="entry name" value="Glucocorticoid receptor-like (DNA-binding domain)"/>
    <property type="match status" value="1"/>
</dbReference>
<dbReference type="PROSITE" id="PS00527">
    <property type="entry name" value="RIBOSOMAL_S14"/>
    <property type="match status" value="1"/>
</dbReference>
<protein>
    <recommendedName>
        <fullName evidence="1">Small ribosomal subunit protein uS14</fullName>
    </recommendedName>
    <alternativeName>
        <fullName evidence="2">30S ribosomal protein S14</fullName>
    </alternativeName>
</protein>
<organism>
    <name type="scientific">Brucella anthropi (strain ATCC 49188 / DSM 6882 / CCUG 24695 / JCM 21032 / LMG 3331 / NBRC 15819 / NCTC 12168 / Alc 37)</name>
    <name type="common">Ochrobactrum anthropi</name>
    <dbReference type="NCBI Taxonomy" id="439375"/>
    <lineage>
        <taxon>Bacteria</taxon>
        <taxon>Pseudomonadati</taxon>
        <taxon>Pseudomonadota</taxon>
        <taxon>Alphaproteobacteria</taxon>
        <taxon>Hyphomicrobiales</taxon>
        <taxon>Brucellaceae</taxon>
        <taxon>Brucella/Ochrobactrum group</taxon>
        <taxon>Brucella</taxon>
    </lineage>
</organism>
<reference key="1">
    <citation type="journal article" date="2011" name="J. Bacteriol.">
        <title>Genome of Ochrobactrum anthropi ATCC 49188 T, a versatile opportunistic pathogen and symbiont of several eukaryotic hosts.</title>
        <authorList>
            <person name="Chain P.S."/>
            <person name="Lang D.M."/>
            <person name="Comerci D.J."/>
            <person name="Malfatti S.A."/>
            <person name="Vergez L.M."/>
            <person name="Shin M."/>
            <person name="Ugalde R.A."/>
            <person name="Garcia E."/>
            <person name="Tolmasky M.E."/>
        </authorList>
    </citation>
    <scope>NUCLEOTIDE SEQUENCE [LARGE SCALE GENOMIC DNA]</scope>
    <source>
        <strain>ATCC 49188 / DSM 6882 / CCUG 24695 / JCM 21032 / LMG 3331 / NBRC 15819 / NCTC 12168 / Alc 37</strain>
    </source>
</reference>
<proteinExistence type="inferred from homology"/>
<keyword id="KW-1185">Reference proteome</keyword>
<keyword id="KW-0687">Ribonucleoprotein</keyword>
<keyword id="KW-0689">Ribosomal protein</keyword>
<keyword id="KW-0694">RNA-binding</keyword>
<keyword id="KW-0699">rRNA-binding</keyword>
<gene>
    <name evidence="1" type="primary">rpsN</name>
    <name type="ordered locus">Oant_1969</name>
</gene>
<evidence type="ECO:0000255" key="1">
    <source>
        <dbReference type="HAMAP-Rule" id="MF_00537"/>
    </source>
</evidence>
<evidence type="ECO:0000305" key="2"/>
<accession>A6X0D1</accession>